<organism>
    <name type="scientific">Bacillus licheniformis (strain ATCC 14580 / DSM 13 / JCM 2505 / CCUG 7422 / NBRC 12200 / NCIMB 9375 / NCTC 10341 / NRRL NRS-1264 / Gibson 46)</name>
    <dbReference type="NCBI Taxonomy" id="279010"/>
    <lineage>
        <taxon>Bacteria</taxon>
        <taxon>Bacillati</taxon>
        <taxon>Bacillota</taxon>
        <taxon>Bacilli</taxon>
        <taxon>Bacillales</taxon>
        <taxon>Bacillaceae</taxon>
        <taxon>Bacillus</taxon>
    </lineage>
</organism>
<proteinExistence type="inferred from homology"/>
<comment type="function">
    <text evidence="1">Cell wall formation.</text>
</comment>
<comment type="catalytic activity">
    <reaction evidence="1">
        <text>UDP-N-acetyl-alpha-D-muramate + L-alanine + ATP = UDP-N-acetyl-alpha-D-muramoyl-L-alanine + ADP + phosphate + H(+)</text>
        <dbReference type="Rhea" id="RHEA:23372"/>
        <dbReference type="ChEBI" id="CHEBI:15378"/>
        <dbReference type="ChEBI" id="CHEBI:30616"/>
        <dbReference type="ChEBI" id="CHEBI:43474"/>
        <dbReference type="ChEBI" id="CHEBI:57972"/>
        <dbReference type="ChEBI" id="CHEBI:70757"/>
        <dbReference type="ChEBI" id="CHEBI:83898"/>
        <dbReference type="ChEBI" id="CHEBI:456216"/>
        <dbReference type="EC" id="6.3.2.8"/>
    </reaction>
</comment>
<comment type="pathway">
    <text evidence="1">Cell wall biogenesis; peptidoglycan biosynthesis.</text>
</comment>
<comment type="subcellular location">
    <subcellularLocation>
        <location evidence="1">Cytoplasm</location>
    </subcellularLocation>
</comment>
<comment type="similarity">
    <text evidence="1">Belongs to the MurCDEF family.</text>
</comment>
<feature type="chain" id="PRO_0000182053" description="UDP-N-acetylmuramate--L-alanine ligase">
    <location>
        <begin position="1"/>
        <end position="432"/>
    </location>
</feature>
<feature type="binding site" evidence="1">
    <location>
        <begin position="108"/>
        <end position="114"/>
    </location>
    <ligand>
        <name>ATP</name>
        <dbReference type="ChEBI" id="CHEBI:30616"/>
    </ligand>
</feature>
<gene>
    <name evidence="1" type="primary">murC</name>
    <name type="ordered locus">BLi03131</name>
    <name type="ordered locus">BL00050</name>
</gene>
<keyword id="KW-0067">ATP-binding</keyword>
<keyword id="KW-0131">Cell cycle</keyword>
<keyword id="KW-0132">Cell division</keyword>
<keyword id="KW-0133">Cell shape</keyword>
<keyword id="KW-0961">Cell wall biogenesis/degradation</keyword>
<keyword id="KW-0963">Cytoplasm</keyword>
<keyword id="KW-0436">Ligase</keyword>
<keyword id="KW-0547">Nucleotide-binding</keyword>
<keyword id="KW-0573">Peptidoglycan synthesis</keyword>
<keyword id="KW-1185">Reference proteome</keyword>
<evidence type="ECO:0000255" key="1">
    <source>
        <dbReference type="HAMAP-Rule" id="MF_00046"/>
    </source>
</evidence>
<protein>
    <recommendedName>
        <fullName evidence="1">UDP-N-acetylmuramate--L-alanine ligase</fullName>
        <ecNumber evidence="1">6.3.2.8</ecNumber>
    </recommendedName>
    <alternativeName>
        <fullName evidence="1">UDP-N-acetylmuramoyl-L-alanine synthetase</fullName>
    </alternativeName>
</protein>
<accession>Q65G22</accession>
<accession>Q62RH7</accession>
<reference key="1">
    <citation type="journal article" date="2004" name="J. Mol. Microbiol. Biotechnol.">
        <title>The complete genome sequence of Bacillus licheniformis DSM13, an organism with great industrial potential.</title>
        <authorList>
            <person name="Veith B."/>
            <person name="Herzberg C."/>
            <person name="Steckel S."/>
            <person name="Feesche J."/>
            <person name="Maurer K.H."/>
            <person name="Ehrenreich P."/>
            <person name="Baeumer S."/>
            <person name="Henne A."/>
            <person name="Liesegang H."/>
            <person name="Merkl R."/>
            <person name="Ehrenreich A."/>
            <person name="Gottschalk G."/>
        </authorList>
    </citation>
    <scope>NUCLEOTIDE SEQUENCE [LARGE SCALE GENOMIC DNA]</scope>
    <source>
        <strain>ATCC 14580 / DSM 13 / JCM 2505 / CCUG 7422 / NBRC 12200 / NCIMB 9375 / NCTC 10341 / NRRL NRS-1264 / Gibson 46</strain>
    </source>
</reference>
<reference key="2">
    <citation type="journal article" date="2004" name="Genome Biol.">
        <title>Complete genome sequence of the industrial bacterium Bacillus licheniformis and comparisons with closely related Bacillus species.</title>
        <authorList>
            <person name="Rey M.W."/>
            <person name="Ramaiya P."/>
            <person name="Nelson B.A."/>
            <person name="Brody-Karpin S.D."/>
            <person name="Zaretsky E.J."/>
            <person name="Tang M."/>
            <person name="Lopez de Leon A."/>
            <person name="Xiang H."/>
            <person name="Gusti V."/>
            <person name="Clausen I.G."/>
            <person name="Olsen P.B."/>
            <person name="Rasmussen M.D."/>
            <person name="Andersen J.T."/>
            <person name="Joergensen P.L."/>
            <person name="Larsen T.S."/>
            <person name="Sorokin A."/>
            <person name="Bolotin A."/>
            <person name="Lapidus A."/>
            <person name="Galleron N."/>
            <person name="Ehrlich S.D."/>
            <person name="Berka R.M."/>
        </authorList>
    </citation>
    <scope>NUCLEOTIDE SEQUENCE [LARGE SCALE GENOMIC DNA]</scope>
    <source>
        <strain>ATCC 14580 / DSM 13 / JCM 2505 / CCUG 7422 / NBRC 12200 / NCIMB 9375 / NCTC 10341 / NRRL NRS-1264 / Gibson 46</strain>
    </source>
</reference>
<reference key="3">
    <citation type="submission" date="2007-04" db="EMBL/GenBank/DDBJ databases">
        <authorList>
            <person name="Berka R.M."/>
            <person name="Rey M.W."/>
            <person name="Ramaiya P."/>
        </authorList>
    </citation>
    <scope>SEQUENCE REVISION TO 226</scope>
</reference>
<sequence>MTVYHFVGIKGTGMSPLAQILHDNGYNVQGSDIEKYIFTQTALEERNIPIYPFDPENIKPGMTVIAGNAFPDTHPEIEKAQAEGLPVVRYHKFLGDYLKKFTSIAVTGAHGKTSTTGLLSHVIKKAKPTSYLIGDGTGKGCENSEYFVLEACEYRRHFLSYQPDYAIMTNIDFDHPDYFANIDDVFDAFQTMALQVNKGIIACGDDEYLMKIHANVPVVYYGFAEENDFQARNVIKNTEGTTFDVFVRNTFYDTFYIPAYGSHNVLNALAVIALCHYEQVDVDIIKEGLQTFGGVKRRFNEKHAGSQVLIDDYAHHPTEITVTIEAARQKYPERDIVAVFQPHTFTRTQSFLNEFAESLKKADYVYLCDIFGSARENAGKLTIGDLQEKIPQAKLIDENDTSILKEHENAVLIFMGAGDIQKYLRAYENVLA</sequence>
<name>MURC_BACLD</name>
<dbReference type="EC" id="6.3.2.8" evidence="1"/>
<dbReference type="EMBL" id="AE017333">
    <property type="protein sequence ID" value="AAU41992.1"/>
    <property type="molecule type" value="Genomic_DNA"/>
</dbReference>
<dbReference type="EMBL" id="CP000002">
    <property type="protein sequence ID" value="AAU24633.2"/>
    <property type="molecule type" value="Genomic_DNA"/>
</dbReference>
<dbReference type="RefSeq" id="WP_003184455.1">
    <property type="nucleotide sequence ID" value="NC_006322.1"/>
</dbReference>
<dbReference type="SMR" id="Q65G22"/>
<dbReference type="STRING" id="279010.BL00050"/>
<dbReference type="GeneID" id="92860281"/>
<dbReference type="KEGG" id="bld:BLi03131"/>
<dbReference type="KEGG" id="bli:BL00050"/>
<dbReference type="eggNOG" id="COG0773">
    <property type="taxonomic scope" value="Bacteria"/>
</dbReference>
<dbReference type="HOGENOM" id="CLU_028104_1_0_9"/>
<dbReference type="UniPathway" id="UPA00219"/>
<dbReference type="Proteomes" id="UP000000606">
    <property type="component" value="Chromosome"/>
</dbReference>
<dbReference type="GO" id="GO:0005737">
    <property type="term" value="C:cytoplasm"/>
    <property type="evidence" value="ECO:0007669"/>
    <property type="project" value="UniProtKB-SubCell"/>
</dbReference>
<dbReference type="GO" id="GO:0005524">
    <property type="term" value="F:ATP binding"/>
    <property type="evidence" value="ECO:0007669"/>
    <property type="project" value="UniProtKB-UniRule"/>
</dbReference>
<dbReference type="GO" id="GO:0008763">
    <property type="term" value="F:UDP-N-acetylmuramate-L-alanine ligase activity"/>
    <property type="evidence" value="ECO:0007669"/>
    <property type="project" value="UniProtKB-UniRule"/>
</dbReference>
<dbReference type="GO" id="GO:0051301">
    <property type="term" value="P:cell division"/>
    <property type="evidence" value="ECO:0007669"/>
    <property type="project" value="UniProtKB-KW"/>
</dbReference>
<dbReference type="GO" id="GO:0071555">
    <property type="term" value="P:cell wall organization"/>
    <property type="evidence" value="ECO:0007669"/>
    <property type="project" value="UniProtKB-KW"/>
</dbReference>
<dbReference type="GO" id="GO:0009252">
    <property type="term" value="P:peptidoglycan biosynthetic process"/>
    <property type="evidence" value="ECO:0007669"/>
    <property type="project" value="UniProtKB-UniRule"/>
</dbReference>
<dbReference type="GO" id="GO:0008360">
    <property type="term" value="P:regulation of cell shape"/>
    <property type="evidence" value="ECO:0007669"/>
    <property type="project" value="UniProtKB-KW"/>
</dbReference>
<dbReference type="Gene3D" id="3.90.190.20">
    <property type="entry name" value="Mur ligase, C-terminal domain"/>
    <property type="match status" value="1"/>
</dbReference>
<dbReference type="Gene3D" id="3.40.1190.10">
    <property type="entry name" value="Mur-like, catalytic domain"/>
    <property type="match status" value="1"/>
</dbReference>
<dbReference type="Gene3D" id="3.40.50.720">
    <property type="entry name" value="NAD(P)-binding Rossmann-like Domain"/>
    <property type="match status" value="1"/>
</dbReference>
<dbReference type="HAMAP" id="MF_00046">
    <property type="entry name" value="MurC"/>
    <property type="match status" value="1"/>
</dbReference>
<dbReference type="InterPro" id="IPR036565">
    <property type="entry name" value="Mur-like_cat_sf"/>
</dbReference>
<dbReference type="InterPro" id="IPR004101">
    <property type="entry name" value="Mur_ligase_C"/>
</dbReference>
<dbReference type="InterPro" id="IPR036615">
    <property type="entry name" value="Mur_ligase_C_dom_sf"/>
</dbReference>
<dbReference type="InterPro" id="IPR013221">
    <property type="entry name" value="Mur_ligase_cen"/>
</dbReference>
<dbReference type="InterPro" id="IPR000713">
    <property type="entry name" value="Mur_ligase_N"/>
</dbReference>
<dbReference type="InterPro" id="IPR050061">
    <property type="entry name" value="MurCDEF_pg_biosynth"/>
</dbReference>
<dbReference type="InterPro" id="IPR005758">
    <property type="entry name" value="UDP-N-AcMur_Ala_ligase_MurC"/>
</dbReference>
<dbReference type="NCBIfam" id="TIGR01082">
    <property type="entry name" value="murC"/>
    <property type="match status" value="1"/>
</dbReference>
<dbReference type="PANTHER" id="PTHR43445:SF3">
    <property type="entry name" value="UDP-N-ACETYLMURAMATE--L-ALANINE LIGASE"/>
    <property type="match status" value="1"/>
</dbReference>
<dbReference type="PANTHER" id="PTHR43445">
    <property type="entry name" value="UDP-N-ACETYLMURAMATE--L-ALANINE LIGASE-RELATED"/>
    <property type="match status" value="1"/>
</dbReference>
<dbReference type="Pfam" id="PF01225">
    <property type="entry name" value="Mur_ligase"/>
    <property type="match status" value="1"/>
</dbReference>
<dbReference type="Pfam" id="PF02875">
    <property type="entry name" value="Mur_ligase_C"/>
    <property type="match status" value="1"/>
</dbReference>
<dbReference type="Pfam" id="PF08245">
    <property type="entry name" value="Mur_ligase_M"/>
    <property type="match status" value="1"/>
</dbReference>
<dbReference type="SUPFAM" id="SSF51984">
    <property type="entry name" value="MurCD N-terminal domain"/>
    <property type="match status" value="1"/>
</dbReference>
<dbReference type="SUPFAM" id="SSF53623">
    <property type="entry name" value="MurD-like peptide ligases, catalytic domain"/>
    <property type="match status" value="1"/>
</dbReference>
<dbReference type="SUPFAM" id="SSF53244">
    <property type="entry name" value="MurD-like peptide ligases, peptide-binding domain"/>
    <property type="match status" value="1"/>
</dbReference>